<evidence type="ECO:0000250" key="1"/>
<evidence type="ECO:0000255" key="2">
    <source>
        <dbReference type="PROSITE-ProRule" id="PRU00145"/>
    </source>
</evidence>
<evidence type="ECO:0000255" key="3">
    <source>
        <dbReference type="PROSITE-ProRule" id="PRU00389"/>
    </source>
</evidence>
<evidence type="ECO:0000256" key="4">
    <source>
        <dbReference type="SAM" id="MobiDB-lite"/>
    </source>
</evidence>
<name>IRS2B_XENLA</name>
<organism>
    <name type="scientific">Xenopus laevis</name>
    <name type="common">African clawed frog</name>
    <dbReference type="NCBI Taxonomy" id="8355"/>
    <lineage>
        <taxon>Eukaryota</taxon>
        <taxon>Metazoa</taxon>
        <taxon>Chordata</taxon>
        <taxon>Craniata</taxon>
        <taxon>Vertebrata</taxon>
        <taxon>Euteleostomi</taxon>
        <taxon>Amphibia</taxon>
        <taxon>Batrachia</taxon>
        <taxon>Anura</taxon>
        <taxon>Pipoidea</taxon>
        <taxon>Pipidae</taxon>
        <taxon>Xenopodinae</taxon>
        <taxon>Xenopus</taxon>
        <taxon>Xenopus</taxon>
    </lineage>
</organism>
<feature type="chain" id="PRO_0000076226" description="Insulin receptor substrate 2-B">
    <location>
        <begin position="1"/>
        <end position="1077"/>
    </location>
</feature>
<feature type="domain" description="PH" evidence="2">
    <location>
        <begin position="65"/>
        <end position="170"/>
    </location>
</feature>
<feature type="domain" description="IRS-type PTB" evidence="3">
    <location>
        <begin position="195"/>
        <end position="299"/>
    </location>
</feature>
<feature type="region of interest" description="Disordered" evidence="4">
    <location>
        <begin position="1"/>
        <end position="66"/>
    </location>
</feature>
<feature type="region of interest" description="Disordered" evidence="4">
    <location>
        <begin position="342"/>
        <end position="373"/>
    </location>
</feature>
<feature type="region of interest" description="Disordered" evidence="4">
    <location>
        <begin position="428"/>
        <end position="464"/>
    </location>
</feature>
<feature type="region of interest" description="Disordered" evidence="4">
    <location>
        <begin position="476"/>
        <end position="495"/>
    </location>
</feature>
<feature type="region of interest" description="Disordered" evidence="4">
    <location>
        <begin position="530"/>
        <end position="571"/>
    </location>
</feature>
<feature type="short sequence motif" description="YXXM motif 1">
    <location>
        <begin position="33"/>
        <end position="36"/>
    </location>
</feature>
<feature type="short sequence motif" description="YXXM motif 2">
    <location>
        <begin position="147"/>
        <end position="150"/>
    </location>
</feature>
<feature type="short sequence motif" description="YXXM motif 3">
    <location>
        <begin position="499"/>
        <end position="502"/>
    </location>
</feature>
<feature type="short sequence motif" description="YXXM motif 4">
    <location>
        <begin position="595"/>
        <end position="598"/>
    </location>
</feature>
<feature type="short sequence motif" description="YXXM motif 5">
    <location>
        <begin position="608"/>
        <end position="611"/>
    </location>
</feature>
<feature type="short sequence motif" description="YXXM motif 6">
    <location>
        <begin position="634"/>
        <end position="637"/>
    </location>
</feature>
<feature type="short sequence motif" description="YXXM motif 7">
    <location>
        <begin position="666"/>
        <end position="669"/>
    </location>
</feature>
<feature type="short sequence motif" description="YXXM motif 8">
    <location>
        <begin position="713"/>
        <end position="716"/>
    </location>
</feature>
<feature type="short sequence motif" description="YXXM motif 9">
    <location>
        <begin position="891"/>
        <end position="894"/>
    </location>
</feature>
<feature type="compositionally biased region" description="Polar residues" evidence="4">
    <location>
        <begin position="350"/>
        <end position="364"/>
    </location>
</feature>
<feature type="compositionally biased region" description="Polar residues" evidence="4">
    <location>
        <begin position="428"/>
        <end position="444"/>
    </location>
</feature>
<feature type="compositionally biased region" description="Low complexity" evidence="4">
    <location>
        <begin position="445"/>
        <end position="457"/>
    </location>
</feature>
<feature type="compositionally biased region" description="Polar residues" evidence="4">
    <location>
        <begin position="477"/>
        <end position="495"/>
    </location>
</feature>
<feature type="compositionally biased region" description="Polar residues" evidence="4">
    <location>
        <begin position="530"/>
        <end position="544"/>
    </location>
</feature>
<proteinExistence type="evidence at transcript level"/>
<keyword id="KW-0597">Phosphoprotein</keyword>
<keyword id="KW-1185">Reference proteome</keyword>
<keyword id="KW-0677">Repeat</keyword>
<keyword id="KW-0807">Transducer</keyword>
<protein>
    <recommendedName>
        <fullName>Insulin receptor substrate 2-B</fullName>
        <shortName>IRS-2-B</shortName>
    </recommendedName>
</protein>
<accession>Q5RJW5</accession>
<gene>
    <name type="primary">irs2-b</name>
</gene>
<dbReference type="EMBL" id="BC086477">
    <property type="protein sequence ID" value="AAH86477.1"/>
    <property type="molecule type" value="mRNA"/>
</dbReference>
<dbReference type="RefSeq" id="NP_001088662.1">
    <property type="nucleotide sequence ID" value="NM_001095193.1"/>
</dbReference>
<dbReference type="SMR" id="Q5RJW5"/>
<dbReference type="BioGRID" id="105916">
    <property type="interactions" value="1"/>
</dbReference>
<dbReference type="IntAct" id="Q5RJW5">
    <property type="interactions" value="1"/>
</dbReference>
<dbReference type="DNASU" id="495836"/>
<dbReference type="GeneID" id="495836"/>
<dbReference type="KEGG" id="xla:495836"/>
<dbReference type="AGR" id="Xenbase:XB-GENE-6253207"/>
<dbReference type="CTD" id="495836"/>
<dbReference type="Xenbase" id="XB-GENE-6253207">
    <property type="gene designation" value="irs4.L"/>
</dbReference>
<dbReference type="OMA" id="HPSDSNY"/>
<dbReference type="OrthoDB" id="946068at2759"/>
<dbReference type="Proteomes" id="UP000186698">
    <property type="component" value="Chromosome 8L"/>
</dbReference>
<dbReference type="Bgee" id="495836">
    <property type="expression patterns" value="Expressed in blastula and 19 other cell types or tissues"/>
</dbReference>
<dbReference type="GO" id="GO:0005829">
    <property type="term" value="C:cytosol"/>
    <property type="evidence" value="ECO:0000318"/>
    <property type="project" value="GO_Central"/>
</dbReference>
<dbReference type="GO" id="GO:0005886">
    <property type="term" value="C:plasma membrane"/>
    <property type="evidence" value="ECO:0000318"/>
    <property type="project" value="GO_Central"/>
</dbReference>
<dbReference type="GO" id="GO:0005158">
    <property type="term" value="F:insulin receptor binding"/>
    <property type="evidence" value="ECO:0000318"/>
    <property type="project" value="GO_Central"/>
</dbReference>
<dbReference type="GO" id="GO:0043548">
    <property type="term" value="F:phosphatidylinositol 3-kinase binding"/>
    <property type="evidence" value="ECO:0000318"/>
    <property type="project" value="GO_Central"/>
</dbReference>
<dbReference type="GO" id="GO:0008286">
    <property type="term" value="P:insulin receptor signaling pathway"/>
    <property type="evidence" value="ECO:0000318"/>
    <property type="project" value="GO_Central"/>
</dbReference>
<dbReference type="CDD" id="cd01257">
    <property type="entry name" value="PH_IRS"/>
    <property type="match status" value="1"/>
</dbReference>
<dbReference type="CDD" id="cd01204">
    <property type="entry name" value="PTB_IRS"/>
    <property type="match status" value="1"/>
</dbReference>
<dbReference type="FunFam" id="2.30.29.30:FF:000029">
    <property type="entry name" value="Insulin receptor substrate 1"/>
    <property type="match status" value="1"/>
</dbReference>
<dbReference type="Gene3D" id="2.30.29.30">
    <property type="entry name" value="Pleckstrin-homology domain (PH domain)/Phosphotyrosine-binding domain (PTB)"/>
    <property type="match status" value="2"/>
</dbReference>
<dbReference type="InterPro" id="IPR039011">
    <property type="entry name" value="IRS"/>
</dbReference>
<dbReference type="InterPro" id="IPR002404">
    <property type="entry name" value="IRS_PTB"/>
</dbReference>
<dbReference type="InterPro" id="IPR011993">
    <property type="entry name" value="PH-like_dom_sf"/>
</dbReference>
<dbReference type="InterPro" id="IPR001849">
    <property type="entry name" value="PH_domain"/>
</dbReference>
<dbReference type="PANTHER" id="PTHR10614">
    <property type="entry name" value="INSULIN RECEPTOR SUBSTRATE"/>
    <property type="match status" value="1"/>
</dbReference>
<dbReference type="PANTHER" id="PTHR10614:SF2">
    <property type="entry name" value="INSULIN RECEPTOR SUBSTRATE 4"/>
    <property type="match status" value="1"/>
</dbReference>
<dbReference type="Pfam" id="PF02174">
    <property type="entry name" value="IRS"/>
    <property type="match status" value="1"/>
</dbReference>
<dbReference type="Pfam" id="PF00169">
    <property type="entry name" value="PH"/>
    <property type="match status" value="1"/>
</dbReference>
<dbReference type="PRINTS" id="PR00628">
    <property type="entry name" value="INSULINRSI"/>
</dbReference>
<dbReference type="SMART" id="SM01244">
    <property type="entry name" value="IRS"/>
    <property type="match status" value="1"/>
</dbReference>
<dbReference type="SMART" id="SM00233">
    <property type="entry name" value="PH"/>
    <property type="match status" value="1"/>
</dbReference>
<dbReference type="SMART" id="SM00310">
    <property type="entry name" value="PTBI"/>
    <property type="match status" value="1"/>
</dbReference>
<dbReference type="SUPFAM" id="SSF50729">
    <property type="entry name" value="PH domain-like"/>
    <property type="match status" value="2"/>
</dbReference>
<dbReference type="PROSITE" id="PS51064">
    <property type="entry name" value="IRS_PTB"/>
    <property type="match status" value="1"/>
</dbReference>
<dbReference type="PROSITE" id="PS50003">
    <property type="entry name" value="PH_DOMAIN"/>
    <property type="match status" value="1"/>
</dbReference>
<reference key="1">
    <citation type="submission" date="2004-11" db="EMBL/GenBank/DDBJ databases">
        <authorList>
            <consortium name="NIH - Xenopus Gene Collection (XGC) project"/>
        </authorList>
    </citation>
    <scope>NUCLEOTIDE SEQUENCE [LARGE SCALE MRNA]</scope>
    <source>
        <tissue>Spleen</tissue>
    </source>
</reference>
<sequence>MAGVLCPTEEDRSIRAAVRMLPPQPCPDESGGYRRMSGPTLSQVQEEPAAETPQPPAPASTAEDDVRKRGYLRKQKHGHKRYFVLRSQSHLGPARLEYYDNEKKFRSGQRSGCHPKRVIPLYLCFTVSRRADAKNKHLVALYTKDEYFAMAAENEQEQDGWYQALSELINESKGACLDTEELEENYGTLRPGTVFKEVWQVNVKPRGLGQAKNLSGVYRLCLSSKAVHLVKLNSDVACVHLLLMNIRRCGHSENYFFIEVGRSSSTGAGELWMQVDDCVVAQHMHETFLDTMKALKAYSEFRPRSKSQSSGTNPISFITTRRYLGNLPPSQTGLQQRRARTETVVGTPPSAKNNSFRFRTSSEGEGTMTRPFRSVTGSLSHLNTARINLGKQEGVGRYVRAPFNSGYHSRSASLPVSHFPSATSPISVCSSNGHGSASETLTRPSSSSVCGSPSDGGFISSDEYGSSPGDLRYFRVRSNTPDSLGNTPPIQEENTLSDYMSMSAHSQPDSRDDYMEADKCFRKRTYSLTKPTNAASQQKSQTAVSLDEDSEETNKQFAYAESPKLKDSSHVEDYSNGVIDSVCNHSRRKASDDGYMPMMPSNSYDSDYLPMAPKSVSAPKQINSCPSQVDSKGYMMMFPVNGSPVKNVFGGAATKSNIEKLSNGGYMDMSYGNSIKQVHDSSLNNNSRGLSSYFSLPRSFKSLTKQTSDHSEYVPMSSPGKLLHLGAENGVDACTNGADHNVAKTELKSPSSTLDQQVKRPTKLMLGIRGSNTIPRMFDHSASAEPTSPGEYINIDFSDKASSTPCSLSAEGSPSSLGSSCDHRHSPLSDYMSVDIDVQSPKATADLCDSLTDISPYACTVVSRMQPNAEYAKLPCGTACVSKTDNRIDDYTTMTFNMAMTPPRSFAGETENGTKVDSPSSIVNRLCIGDLTSLNGGFSLPNPLPEPMAGPKVIRADSQGRRRHSSETFSSASTVTTSSSCFTESSKRHSSASFDNVWLKSDENCCEQENKMSRNCSTGFQNGLNYIALSMHDGVCEPTSPACHQHQNGSRILENGGYVSIDFTRSDCLKCPSSRKD</sequence>
<comment type="function">
    <text evidence="1">Potentiates insulin signaling.</text>
</comment>
<comment type="PTM">
    <text evidence="1">Phosphorylated by INSR.</text>
</comment>